<comment type="function">
    <text evidence="1">O-methyltransferase that catalyzes the 2 O-methylation steps in the ubiquinone biosynthetic pathway.</text>
</comment>
<comment type="catalytic activity">
    <reaction evidence="1">
        <text>a 3-demethylubiquinol + S-adenosyl-L-methionine = a ubiquinol + S-adenosyl-L-homocysteine + H(+)</text>
        <dbReference type="Rhea" id="RHEA:44380"/>
        <dbReference type="Rhea" id="RHEA-COMP:9566"/>
        <dbReference type="Rhea" id="RHEA-COMP:10914"/>
        <dbReference type="ChEBI" id="CHEBI:15378"/>
        <dbReference type="ChEBI" id="CHEBI:17976"/>
        <dbReference type="ChEBI" id="CHEBI:57856"/>
        <dbReference type="ChEBI" id="CHEBI:59789"/>
        <dbReference type="ChEBI" id="CHEBI:84422"/>
        <dbReference type="EC" id="2.1.1.64"/>
    </reaction>
</comment>
<comment type="catalytic activity">
    <reaction evidence="1">
        <text>a 3-(all-trans-polyprenyl)benzene-1,2-diol + S-adenosyl-L-methionine = a 2-methoxy-6-(all-trans-polyprenyl)phenol + S-adenosyl-L-homocysteine + H(+)</text>
        <dbReference type="Rhea" id="RHEA:31411"/>
        <dbReference type="Rhea" id="RHEA-COMP:9550"/>
        <dbReference type="Rhea" id="RHEA-COMP:9551"/>
        <dbReference type="ChEBI" id="CHEBI:15378"/>
        <dbReference type="ChEBI" id="CHEBI:57856"/>
        <dbReference type="ChEBI" id="CHEBI:59789"/>
        <dbReference type="ChEBI" id="CHEBI:62729"/>
        <dbReference type="ChEBI" id="CHEBI:62731"/>
        <dbReference type="EC" id="2.1.1.222"/>
    </reaction>
</comment>
<comment type="pathway">
    <text evidence="1">Cofactor biosynthesis; ubiquinone biosynthesis.</text>
</comment>
<comment type="similarity">
    <text evidence="1">Belongs to the methyltransferase superfamily. UbiG/COQ3 family.</text>
</comment>
<reference key="1">
    <citation type="journal article" date="2004" name="Proc. Natl. Acad. Sci. U.S.A.">
        <title>Genome sequence of the enterobacterial phytopathogen Erwinia carotovora subsp. atroseptica and characterization of virulence factors.</title>
        <authorList>
            <person name="Bell K.S."/>
            <person name="Sebaihia M."/>
            <person name="Pritchard L."/>
            <person name="Holden M.T.G."/>
            <person name="Hyman L.J."/>
            <person name="Holeva M.C."/>
            <person name="Thomson N.R."/>
            <person name="Bentley S.D."/>
            <person name="Churcher L.J.C."/>
            <person name="Mungall K."/>
            <person name="Atkin R."/>
            <person name="Bason N."/>
            <person name="Brooks K."/>
            <person name="Chillingworth T."/>
            <person name="Clark K."/>
            <person name="Doggett J."/>
            <person name="Fraser A."/>
            <person name="Hance Z."/>
            <person name="Hauser H."/>
            <person name="Jagels K."/>
            <person name="Moule S."/>
            <person name="Norbertczak H."/>
            <person name="Ormond D."/>
            <person name="Price C."/>
            <person name="Quail M.A."/>
            <person name="Sanders M."/>
            <person name="Walker D."/>
            <person name="Whitehead S."/>
            <person name="Salmond G.P.C."/>
            <person name="Birch P.R.J."/>
            <person name="Parkhill J."/>
            <person name="Toth I.K."/>
        </authorList>
    </citation>
    <scope>NUCLEOTIDE SEQUENCE [LARGE SCALE GENOMIC DNA]</scope>
    <source>
        <strain>SCRI 1043 / ATCC BAA-672</strain>
    </source>
</reference>
<dbReference type="EC" id="2.1.1.222" evidence="1"/>
<dbReference type="EC" id="2.1.1.64" evidence="1"/>
<dbReference type="EMBL" id="BX950851">
    <property type="protein sequence ID" value="CAG74110.1"/>
    <property type="molecule type" value="Genomic_DNA"/>
</dbReference>
<dbReference type="RefSeq" id="WP_011092791.1">
    <property type="nucleotide sequence ID" value="NC_004547.2"/>
</dbReference>
<dbReference type="SMR" id="Q6D7X5"/>
<dbReference type="STRING" id="218491.ECA1200"/>
<dbReference type="DNASU" id="2884210"/>
<dbReference type="KEGG" id="eca:ECA1200"/>
<dbReference type="eggNOG" id="COG2227">
    <property type="taxonomic scope" value="Bacteria"/>
</dbReference>
<dbReference type="HOGENOM" id="CLU_042432_5_0_6"/>
<dbReference type="OrthoDB" id="9801538at2"/>
<dbReference type="UniPathway" id="UPA00232"/>
<dbReference type="Proteomes" id="UP000007966">
    <property type="component" value="Chromosome"/>
</dbReference>
<dbReference type="GO" id="GO:0102208">
    <property type="term" value="F:2-polyprenyl-6-hydroxyphenol methylase activity"/>
    <property type="evidence" value="ECO:0007669"/>
    <property type="project" value="UniProtKB-EC"/>
</dbReference>
<dbReference type="GO" id="GO:0061542">
    <property type="term" value="F:3-demethylubiquinol 3-O-methyltransferase activity"/>
    <property type="evidence" value="ECO:0007669"/>
    <property type="project" value="UniProtKB-UniRule"/>
</dbReference>
<dbReference type="GO" id="GO:0010420">
    <property type="term" value="F:polyprenyldihydroxybenzoate methyltransferase activity"/>
    <property type="evidence" value="ECO:0007669"/>
    <property type="project" value="InterPro"/>
</dbReference>
<dbReference type="GO" id="GO:0032259">
    <property type="term" value="P:methylation"/>
    <property type="evidence" value="ECO:0007669"/>
    <property type="project" value="UniProtKB-KW"/>
</dbReference>
<dbReference type="CDD" id="cd02440">
    <property type="entry name" value="AdoMet_MTases"/>
    <property type="match status" value="1"/>
</dbReference>
<dbReference type="FunFam" id="3.40.50.150:FF:000028">
    <property type="entry name" value="Ubiquinone biosynthesis O-methyltransferase"/>
    <property type="match status" value="1"/>
</dbReference>
<dbReference type="Gene3D" id="3.40.50.150">
    <property type="entry name" value="Vaccinia Virus protein VP39"/>
    <property type="match status" value="1"/>
</dbReference>
<dbReference type="HAMAP" id="MF_00472">
    <property type="entry name" value="UbiG"/>
    <property type="match status" value="1"/>
</dbReference>
<dbReference type="InterPro" id="IPR029063">
    <property type="entry name" value="SAM-dependent_MTases_sf"/>
</dbReference>
<dbReference type="InterPro" id="IPR010233">
    <property type="entry name" value="UbiG_MeTrfase"/>
</dbReference>
<dbReference type="NCBIfam" id="TIGR01983">
    <property type="entry name" value="UbiG"/>
    <property type="match status" value="1"/>
</dbReference>
<dbReference type="PANTHER" id="PTHR43464">
    <property type="entry name" value="METHYLTRANSFERASE"/>
    <property type="match status" value="1"/>
</dbReference>
<dbReference type="PANTHER" id="PTHR43464:SF19">
    <property type="entry name" value="UBIQUINONE BIOSYNTHESIS O-METHYLTRANSFERASE, MITOCHONDRIAL"/>
    <property type="match status" value="1"/>
</dbReference>
<dbReference type="Pfam" id="PF13489">
    <property type="entry name" value="Methyltransf_23"/>
    <property type="match status" value="1"/>
</dbReference>
<dbReference type="SUPFAM" id="SSF53335">
    <property type="entry name" value="S-adenosyl-L-methionine-dependent methyltransferases"/>
    <property type="match status" value="1"/>
</dbReference>
<protein>
    <recommendedName>
        <fullName evidence="1">Ubiquinone biosynthesis O-methyltransferase</fullName>
    </recommendedName>
    <alternativeName>
        <fullName evidence="1">2-polyprenyl-6-hydroxyphenol methylase</fullName>
        <ecNumber evidence="1">2.1.1.222</ecNumber>
    </alternativeName>
    <alternativeName>
        <fullName evidence="1">3-demethylubiquinone 3-O-methyltransferase</fullName>
        <ecNumber evidence="1">2.1.1.64</ecNumber>
    </alternativeName>
</protein>
<feature type="chain" id="PRO_0000193382" description="Ubiquinone biosynthesis O-methyltransferase">
    <location>
        <begin position="1"/>
        <end position="241"/>
    </location>
</feature>
<feature type="binding site" evidence="1">
    <location>
        <position position="42"/>
    </location>
    <ligand>
        <name>S-adenosyl-L-methionine</name>
        <dbReference type="ChEBI" id="CHEBI:59789"/>
    </ligand>
</feature>
<feature type="binding site" evidence="1">
    <location>
        <position position="62"/>
    </location>
    <ligand>
        <name>S-adenosyl-L-methionine</name>
        <dbReference type="ChEBI" id="CHEBI:59789"/>
    </ligand>
</feature>
<feature type="binding site" evidence="1">
    <location>
        <position position="83"/>
    </location>
    <ligand>
        <name>S-adenosyl-L-methionine</name>
        <dbReference type="ChEBI" id="CHEBI:59789"/>
    </ligand>
</feature>
<feature type="binding site" evidence="1">
    <location>
        <position position="127"/>
    </location>
    <ligand>
        <name>S-adenosyl-L-methionine</name>
        <dbReference type="ChEBI" id="CHEBI:59789"/>
    </ligand>
</feature>
<proteinExistence type="inferred from homology"/>
<evidence type="ECO:0000255" key="1">
    <source>
        <dbReference type="HAMAP-Rule" id="MF_00472"/>
    </source>
</evidence>
<sequence length="241" mass="26982">MNVENQTPNVDHQEIAKFEAIASRWWDLEGEFKPLHRINPLRLGYISQRAEGLFGKKVLDVGCGGGILAESMAREGADVTGLDMGAEPLQVARLHALESGVTVDYVQETVEAHADAHSGLYDVVTCMEMLEHVPDPQSVVQACAKLVKPGGHVFFSTINRNAKAWMMAVIGAEYILKMVPRGTHDIKKFIRPAELMRWVDDTPLRERHITGLHYNLLTDRFKLGPNVDVNYMLHTSHDKQC</sequence>
<gene>
    <name evidence="1" type="primary">ubiG</name>
    <name type="ordered locus">ECA1200</name>
</gene>
<keyword id="KW-0489">Methyltransferase</keyword>
<keyword id="KW-1185">Reference proteome</keyword>
<keyword id="KW-0949">S-adenosyl-L-methionine</keyword>
<keyword id="KW-0808">Transferase</keyword>
<keyword id="KW-0831">Ubiquinone biosynthesis</keyword>
<organism>
    <name type="scientific">Pectobacterium atrosepticum (strain SCRI 1043 / ATCC BAA-672)</name>
    <name type="common">Erwinia carotovora subsp. atroseptica</name>
    <dbReference type="NCBI Taxonomy" id="218491"/>
    <lineage>
        <taxon>Bacteria</taxon>
        <taxon>Pseudomonadati</taxon>
        <taxon>Pseudomonadota</taxon>
        <taxon>Gammaproteobacteria</taxon>
        <taxon>Enterobacterales</taxon>
        <taxon>Pectobacteriaceae</taxon>
        <taxon>Pectobacterium</taxon>
    </lineage>
</organism>
<name>UBIG_PECAS</name>
<accession>Q6D7X5</accession>